<reference key="1">
    <citation type="journal article" date="2018" name="Cell Host Microbe">
        <title>Dampened STING-dependent interferon activation in bats.</title>
        <authorList>
            <person name="Xie J."/>
            <person name="Li Y."/>
            <person name="Shen X."/>
            <person name="Goh G."/>
            <person name="Zhu Y."/>
            <person name="Cui J."/>
            <person name="Wang L.F."/>
            <person name="Shi Z.L."/>
            <person name="Zhou P."/>
        </authorList>
    </citation>
    <scope>NUCLEOTIDE SEQUENCE [MRNA]</scope>
    <scope>FUNCTION</scope>
    <scope>MUTAGENESIS OF PRO-358</scope>
</reference>
<dbReference type="EMBL" id="MF174846">
    <property type="protein sequence ID" value="ATJ03489.1"/>
    <property type="molecule type" value="mRNA"/>
</dbReference>
<dbReference type="SMR" id="A0A291NUG3"/>
<dbReference type="GO" id="GO:0000421">
    <property type="term" value="C:autophagosome membrane"/>
    <property type="evidence" value="ECO:0007669"/>
    <property type="project" value="UniProtKB-SubCell"/>
</dbReference>
<dbReference type="GO" id="GO:0031410">
    <property type="term" value="C:cytoplasmic vesicle"/>
    <property type="evidence" value="ECO:0007669"/>
    <property type="project" value="UniProtKB-KW"/>
</dbReference>
<dbReference type="GO" id="GO:0005789">
    <property type="term" value="C:endoplasmic reticulum membrane"/>
    <property type="evidence" value="ECO:0007669"/>
    <property type="project" value="UniProtKB-SubCell"/>
</dbReference>
<dbReference type="GO" id="GO:0033116">
    <property type="term" value="C:endoplasmic reticulum-Golgi intermediate compartment membrane"/>
    <property type="evidence" value="ECO:0007669"/>
    <property type="project" value="UniProtKB-SubCell"/>
</dbReference>
<dbReference type="GO" id="GO:0000139">
    <property type="term" value="C:Golgi membrane"/>
    <property type="evidence" value="ECO:0007669"/>
    <property type="project" value="UniProtKB-SubCell"/>
</dbReference>
<dbReference type="GO" id="GO:0005741">
    <property type="term" value="C:mitochondrial outer membrane"/>
    <property type="evidence" value="ECO:0007669"/>
    <property type="project" value="UniProtKB-SubCell"/>
</dbReference>
<dbReference type="GO" id="GO:0048471">
    <property type="term" value="C:perinuclear region of cytoplasm"/>
    <property type="evidence" value="ECO:0007669"/>
    <property type="project" value="UniProtKB-SubCell"/>
</dbReference>
<dbReference type="GO" id="GO:0005886">
    <property type="term" value="C:plasma membrane"/>
    <property type="evidence" value="ECO:0007669"/>
    <property type="project" value="UniProtKB-SubCell"/>
</dbReference>
<dbReference type="GO" id="GO:0061507">
    <property type="term" value="F:2',3'-cyclic GMP-AMP binding"/>
    <property type="evidence" value="ECO:0007669"/>
    <property type="project" value="TreeGrafter"/>
</dbReference>
<dbReference type="GO" id="GO:0035438">
    <property type="term" value="F:cyclic-di-GMP binding"/>
    <property type="evidence" value="ECO:0007669"/>
    <property type="project" value="TreeGrafter"/>
</dbReference>
<dbReference type="GO" id="GO:0015252">
    <property type="term" value="F:proton channel activity"/>
    <property type="evidence" value="ECO:0000250"/>
    <property type="project" value="UniProtKB"/>
</dbReference>
<dbReference type="GO" id="GO:0035591">
    <property type="term" value="F:signaling adaptor activity"/>
    <property type="evidence" value="ECO:0000250"/>
    <property type="project" value="UniProtKB"/>
</dbReference>
<dbReference type="GO" id="GO:0000045">
    <property type="term" value="P:autophagosome assembly"/>
    <property type="evidence" value="ECO:0000250"/>
    <property type="project" value="UniProtKB"/>
</dbReference>
<dbReference type="GO" id="GO:0140896">
    <property type="term" value="P:cGAS/STING signaling pathway"/>
    <property type="evidence" value="ECO:0000250"/>
    <property type="project" value="UniProtKB"/>
</dbReference>
<dbReference type="GO" id="GO:0051607">
    <property type="term" value="P:defense response to virus"/>
    <property type="evidence" value="ECO:0007669"/>
    <property type="project" value="TreeGrafter"/>
</dbReference>
<dbReference type="GO" id="GO:0045087">
    <property type="term" value="P:innate immune response"/>
    <property type="evidence" value="ECO:0007669"/>
    <property type="project" value="UniProtKB-KW"/>
</dbReference>
<dbReference type="GO" id="GO:0016239">
    <property type="term" value="P:positive regulation of macroautophagy"/>
    <property type="evidence" value="ECO:0007669"/>
    <property type="project" value="TreeGrafter"/>
</dbReference>
<dbReference type="GO" id="GO:0032481">
    <property type="term" value="P:positive regulation of type I interferon production"/>
    <property type="evidence" value="ECO:0007669"/>
    <property type="project" value="InterPro"/>
</dbReference>
<dbReference type="GO" id="GO:0061709">
    <property type="term" value="P:reticulophagy"/>
    <property type="evidence" value="ECO:0007669"/>
    <property type="project" value="TreeGrafter"/>
</dbReference>
<dbReference type="CDD" id="cd22658">
    <property type="entry name" value="STING_C_metazoan-like"/>
    <property type="match status" value="1"/>
</dbReference>
<dbReference type="FunFam" id="1.20.5.5200:FF:000001">
    <property type="entry name" value="Stimulator of interferon genes protein"/>
    <property type="match status" value="1"/>
</dbReference>
<dbReference type="FunFam" id="3.40.50.12100:FF:000001">
    <property type="entry name" value="Stimulator of interferon genes protein"/>
    <property type="match status" value="1"/>
</dbReference>
<dbReference type="Gene3D" id="1.20.5.5200">
    <property type="match status" value="1"/>
</dbReference>
<dbReference type="Gene3D" id="3.40.50.12100">
    <property type="entry name" value="Stimulator of interferon genes protein"/>
    <property type="match status" value="1"/>
</dbReference>
<dbReference type="InterPro" id="IPR029158">
    <property type="entry name" value="STING"/>
</dbReference>
<dbReference type="InterPro" id="IPR047191">
    <property type="entry name" value="STING_C_chordates"/>
</dbReference>
<dbReference type="InterPro" id="IPR038623">
    <property type="entry name" value="STING_C_sf"/>
</dbReference>
<dbReference type="InterPro" id="IPR055432">
    <property type="entry name" value="STING_LBD"/>
</dbReference>
<dbReference type="InterPro" id="IPR055434">
    <property type="entry name" value="STING_TM"/>
</dbReference>
<dbReference type="PANTHER" id="PTHR34339">
    <property type="entry name" value="STIMULATOR OF INTERFERON GENES PROTEIN"/>
    <property type="match status" value="1"/>
</dbReference>
<dbReference type="PANTHER" id="PTHR34339:SF1">
    <property type="entry name" value="STIMULATOR OF INTERFERON GENES PROTEIN"/>
    <property type="match status" value="1"/>
</dbReference>
<dbReference type="Pfam" id="PF15009">
    <property type="entry name" value="STING_LBD"/>
    <property type="match status" value="1"/>
</dbReference>
<dbReference type="Pfam" id="PF23417">
    <property type="entry name" value="STING_TM"/>
    <property type="match status" value="1"/>
</dbReference>
<comment type="function">
    <text evidence="3 6">Facilitator of innate immune signaling that acts as a sensor of cytosolic DNA from bacteria and viruses and promotes low production of type I interferon (IFN-alpha and IFN-beta) (PubMed:29478775). Compared to other mammals, STING1-dependent type I interferon induction is strongly reduced in bats, suggesting that the cGAS-STING pathway promotes a limited inflammatory response (PubMed:29478775). Innate immune response is triggered in response to non-CpG double-stranded DNA from viruses and bacteria delivered to the cytoplasm (By similarity). Acts by binding cyclic dinucleotides: recognizes and binds cyclic di-GMP (c-di-GMP), a second messenger produced by bacteria, cyclic UMP-AMP (2',3'-cUAMP), and cyclic GMP-AMP (cGAMP), a messenger produced by CGAS in response to DNA virus in the cytosol (By similarity). Upon binding to c-di-GMP, cUAMP or cGAMP, STING1 oligomerizes, translocates from the endoplasmic reticulum and is phosphorylated by TBK1 on the pLxIS motif, leading to recruitment and subsequent activation of the transcription factor IRF3 to induce expression of type I interferon and exert a potent anti-viral state (By similarity). In addition to promote the production of type I interferons, plays a direct role in autophagy (By similarity). Following cGAMP-binding, STING1 buds from the endoplasmic reticulum into COPII vesicles, which then form the endoplasmic reticulum-Golgi intermediate compartment (ERGIC) (By similarity). The ERGIC serves as the membrane source for WIPI2 recruitment and LC3 lipidation, leading to formation of autophagosomes that target cytosolic DNA or DNA viruses for degradation by the lysosome (By similarity). Promotes autophagy by acting as a proton channel that directs proton efflux from the Golgi to facilitate MAP1LC3B/LC3B lipidation (By similarity). The autophagy- and interferon-inducing activities can be uncoupled and autophagy induction is independent of TBK1 phosphorylation (By similarity).</text>
</comment>
<comment type="catalytic activity">
    <reaction evidence="3">
        <text>H(+)(in) = H(+)(out)</text>
        <dbReference type="Rhea" id="RHEA:34979"/>
        <dbReference type="ChEBI" id="CHEBI:15378"/>
    </reaction>
</comment>
<comment type="subunit">
    <text evidence="2 3">Homodimer; forms a homodimer in absence of cyclic nucleotide (c-di-GMP or cGAMP) (By similarity). Homotetramer; in presence of cyclic nucleotide (c-di-GMP or cGAMP), forms tetramers and higher-order oligomers through side-by-side packing (By similarity). Interacts (when phosphorylated) with IRF3; following activation and phosphorylation on the pLxIS motif by TBK1, recruits IRF3 (By similarity). Interacts with TBK1; when homodimer, leading to subsequent production of IFN-beta. Interacts (via transmembrane domain) with TMEM203 (By similarity).</text>
</comment>
<comment type="subcellular location">
    <subcellularLocation>
        <location evidence="2">Endoplasmic reticulum membrane</location>
        <topology evidence="4">Multi-pass membrane protein</topology>
    </subcellularLocation>
    <subcellularLocation>
        <location evidence="3">Cytoplasm</location>
        <location evidence="3">Perinuclear region</location>
    </subcellularLocation>
    <subcellularLocation>
        <location evidence="2">Endoplasmic reticulum-Golgi intermediate compartment membrane</location>
        <topology evidence="4">Multi-pass membrane protein</topology>
    </subcellularLocation>
    <subcellularLocation>
        <location evidence="3">Golgi apparatus membrane</location>
        <topology evidence="4">Multi-pass membrane protein</topology>
    </subcellularLocation>
    <subcellularLocation>
        <location evidence="2">Cytoplasmic vesicle</location>
        <location evidence="2">Autophagosome membrane</location>
        <topology evidence="4">Multi-pass membrane protein</topology>
    </subcellularLocation>
    <subcellularLocation>
        <location evidence="2">Mitochondrion outer membrane</location>
        <topology evidence="4">Multi-pass membrane protein</topology>
    </subcellularLocation>
    <subcellularLocation>
        <location evidence="2">Cell membrane</location>
        <topology evidence="4">Multi-pass membrane protein</topology>
    </subcellularLocation>
    <text evidence="2 3">In response to double-stranded DNA stimulation, translocates from the endoplasmic reticulum through the endoplasmic reticulum-Golgi intermediate compartment and Golgi to post-Golgi vesicles, where the kinase TBK1 is recruited (By similarity). Upon cGAMP-binding, translocates to the endoplasmic reticulum-Golgi intermediate compartment (ERGIC) in a process that is dependent on COPII vesicles; STING1-containing ERGIC serves as a membrane source for LC3 lipidation, which is a key step in autophagosome biogenesis (By similarity). Localizes in the lysosome membrane in a TMEM203-dependent manner.</text>
</comment>
<comment type="domain">
    <text evidence="1 3">In absence of cGAMP, the transmembrane and cytoplasmic regions interact to form an integrated, domain-swapped dimeric assembly (By similarity). In absence of cyclic nucleotide (c-di-GMP or cGAMP), the protein is autoinhibited by an intramolecular interaction between the cyclic dinucleotide-binding domain (CBD) and the C-terminal tail (CTT) (By similarity). Following cGAMP-binding, the cyclic dinucleotide-binding domain (CBD) is closed, leading to a 180 degrees rotation of the CBD domain relative to the transmembrane domain. This rotation is coupled to a conformational change in a loop on the side of the CBD dimer, which leads to the formation of the STING1 tetramer and higher-order oligomers through side-by-side packing (By similarity).</text>
</comment>
<comment type="domain">
    <text evidence="3">The pLxIS motif constitutes an IRF3-binding motif: following phosphorylation by TBK1, the phosphorylated pLxIS motif of STING1 recruits IRF3 (By similarity). IRF3 is then phosphorylated and activated by TBK1 to induce type-I interferons and other cytokines (By similarity).</text>
</comment>
<comment type="domain">
    <text evidence="3">The N-terminal domain interacts with glycerophospholipids and phospholipids.</text>
</comment>
<comment type="PTM">
    <text evidence="3 6">Phosphorylation by TBK1 leads to activation and production of IFN-beta (By similarity). Following cyclic nucleotide (c-di-GMP or cGAMP)-binding, activation and translocation from the endoplasmic reticulum, STING1 is phosphorylated by TBK1 at Ser-366 in the pLxIS motif (By similarity). The phosphorylated pLxIS motif constitutes an IRF3-binding motif, leading to recruitment of the transcription factor IRF3 to induce type-I interferons and other cytokines (By similarity). In contrast, lacks phosphorylation site at position 358, leading to reduced production of type-I interferons and other cytokines (PubMed:29478775).</text>
</comment>
<comment type="similarity">
    <text evidence="8">Belongs to the STING family.</text>
</comment>
<comment type="caution">
    <text evidence="6">The cGAS-STING pathway promotes a limited inflammatory response in bats (PubMed:29478775). This may be caused by the absence of the phosphorylation site at position 358, which is required to production of type-I interferons and other cytokines in other species (PubMed:29478775). The dampened cGAS-STING pathway may explain why bats show an increased tolerance to highly pathogenic viruses, such as coronaviruses, and serve as a virus reservoir (PubMed:29478775).</text>
</comment>
<proteinExistence type="evidence at protein level"/>
<accession>A0A291NUG3</accession>
<gene>
    <name evidence="3" type="primary">STING1</name>
    <name evidence="7" type="synonym">STING</name>
</gene>
<feature type="chain" id="PRO_0000455459" description="Stimulator of interferon genes protein">
    <location>
        <begin position="1"/>
        <end position="379"/>
    </location>
</feature>
<feature type="transmembrane region" description="Helical" evidence="4">
    <location>
        <begin position="18"/>
        <end position="38"/>
    </location>
</feature>
<feature type="transmembrane region" description="Helical" evidence="4">
    <location>
        <begin position="43"/>
        <end position="63"/>
    </location>
</feature>
<feature type="transmembrane region" description="Helical" evidence="4">
    <location>
        <begin position="89"/>
        <end position="109"/>
    </location>
</feature>
<feature type="transmembrane region" description="Helical" evidence="4">
    <location>
        <begin position="114"/>
        <end position="134"/>
    </location>
</feature>
<feature type="region of interest" description="Cyclic dinucleotide-binding domain (CBD)" evidence="3">
    <location>
        <begin position="153"/>
        <end position="340"/>
    </location>
</feature>
<feature type="region of interest" description="Disordered" evidence="5">
    <location>
        <begin position="338"/>
        <end position="363"/>
    </location>
</feature>
<feature type="region of interest" description="C-terminal tail (CTT)" evidence="3">
    <location>
        <begin position="340"/>
        <end position="379"/>
    </location>
</feature>
<feature type="short sequence motif" description="pLxIS motif" evidence="3">
    <location>
        <begin position="363"/>
        <end position="366"/>
    </location>
</feature>
<feature type="binding site" evidence="3">
    <location>
        <position position="162"/>
    </location>
    <ligand>
        <name>2',3'-cGAMP</name>
        <dbReference type="ChEBI" id="CHEBI:143093"/>
    </ligand>
</feature>
<feature type="binding site" evidence="3">
    <location>
        <position position="162"/>
    </location>
    <ligand>
        <name>3',3'-c-di-GMP</name>
        <dbReference type="ChEBI" id="CHEBI:58805"/>
    </ligand>
</feature>
<feature type="binding site" evidence="3">
    <location>
        <position position="167"/>
    </location>
    <ligand>
        <name>2',3'-cGAMP</name>
        <dbReference type="ChEBI" id="CHEBI:143093"/>
    </ligand>
</feature>
<feature type="binding site" evidence="3">
    <location>
        <position position="167"/>
    </location>
    <ligand>
        <name>2',3'-cUAMP</name>
        <dbReference type="ChEBI" id="CHEBI:228269"/>
    </ligand>
</feature>
<feature type="binding site" evidence="3">
    <location>
        <position position="167"/>
    </location>
    <ligand>
        <name>3',3'-c-di-GMP</name>
        <dbReference type="ChEBI" id="CHEBI:58805"/>
    </ligand>
</feature>
<feature type="binding site" evidence="3">
    <location>
        <begin position="238"/>
        <end position="241"/>
    </location>
    <ligand>
        <name>3',3'-c-di-GMP</name>
        <dbReference type="ChEBI" id="CHEBI:58805"/>
    </ligand>
</feature>
<feature type="binding site" evidence="3">
    <location>
        <position position="238"/>
    </location>
    <ligand>
        <name>2',3'-cGAMP</name>
        <dbReference type="ChEBI" id="CHEBI:143093"/>
    </ligand>
</feature>
<feature type="binding site" evidence="3">
    <location>
        <position position="238"/>
    </location>
    <ligand>
        <name>2',3'-cUAMP</name>
        <dbReference type="ChEBI" id="CHEBI:228269"/>
    </ligand>
</feature>
<feature type="binding site" evidence="3">
    <location>
        <position position="263"/>
    </location>
    <ligand>
        <name>2',3'-cGAMP</name>
        <dbReference type="ChEBI" id="CHEBI:143093"/>
    </ligand>
</feature>
<feature type="binding site" evidence="3">
    <location>
        <position position="263"/>
    </location>
    <ligand>
        <name>2',3'-cUAMP</name>
        <dbReference type="ChEBI" id="CHEBI:228269"/>
    </ligand>
</feature>
<feature type="binding site" evidence="3">
    <location>
        <position position="263"/>
    </location>
    <ligand>
        <name>3',3'-c-di-GMP</name>
        <dbReference type="ChEBI" id="CHEBI:58805"/>
    </ligand>
</feature>
<feature type="site" description="Not phosphorylated" evidence="6">
    <location>
        <position position="358"/>
    </location>
</feature>
<feature type="modified residue" description="Phosphoserine" evidence="3">
    <location>
        <position position="355"/>
    </location>
</feature>
<feature type="modified residue" description="Phosphoserine; by TBK1" evidence="3">
    <location>
        <position position="366"/>
    </location>
</feature>
<feature type="lipid moiety-binding region" description="S-palmitoyl cysteine" evidence="2">
    <location>
        <position position="88"/>
    </location>
</feature>
<feature type="lipid moiety-binding region" description="S-palmitoyl cysteine" evidence="2">
    <location>
        <position position="91"/>
    </location>
</feature>
<feature type="mutagenesis site" description="Restores STING1 ability to induce a strong inflammatory response, resulting in type-I interferon activation and virus inhibition." evidence="6">
    <original>P</original>
    <variation>S</variation>
    <location>
        <position position="358"/>
    </location>
</feature>
<evidence type="ECO:0000250" key="1">
    <source>
        <dbReference type="UniProtKB" id="E1C7U0"/>
    </source>
</evidence>
<evidence type="ECO:0000250" key="2">
    <source>
        <dbReference type="UniProtKB" id="Q3TBT3"/>
    </source>
</evidence>
<evidence type="ECO:0000250" key="3">
    <source>
        <dbReference type="UniProtKB" id="Q86WV6"/>
    </source>
</evidence>
<evidence type="ECO:0000255" key="4"/>
<evidence type="ECO:0000256" key="5">
    <source>
        <dbReference type="SAM" id="MobiDB-lite"/>
    </source>
</evidence>
<evidence type="ECO:0000269" key="6">
    <source>
    </source>
</evidence>
<evidence type="ECO:0000303" key="7">
    <source>
    </source>
</evidence>
<evidence type="ECO:0000305" key="8"/>
<name>STING_PTEPA</name>
<keyword id="KW-1003">Cell membrane</keyword>
<keyword id="KW-0963">Cytoplasm</keyword>
<keyword id="KW-0968">Cytoplasmic vesicle</keyword>
<keyword id="KW-0256">Endoplasmic reticulum</keyword>
<keyword id="KW-0333">Golgi apparatus</keyword>
<keyword id="KW-0391">Immunity</keyword>
<keyword id="KW-0399">Innate immunity</keyword>
<keyword id="KW-0407">Ion channel</keyword>
<keyword id="KW-0406">Ion transport</keyword>
<keyword id="KW-0449">Lipoprotein</keyword>
<keyword id="KW-0472">Membrane</keyword>
<keyword id="KW-0496">Mitochondrion</keyword>
<keyword id="KW-1000">Mitochondrion outer membrane</keyword>
<keyword id="KW-0547">Nucleotide-binding</keyword>
<keyword id="KW-0564">Palmitate</keyword>
<keyword id="KW-0597">Phosphoprotein</keyword>
<keyword id="KW-0812">Transmembrane</keyword>
<keyword id="KW-1133">Transmembrane helix</keyword>
<keyword id="KW-0813">Transport</keyword>
<organism>
    <name type="scientific">Pteronotus parnellii</name>
    <name type="common">Parnell's mustached bat</name>
    <dbReference type="NCBI Taxonomy" id="59476"/>
    <lineage>
        <taxon>Eukaryota</taxon>
        <taxon>Metazoa</taxon>
        <taxon>Chordata</taxon>
        <taxon>Craniata</taxon>
        <taxon>Vertebrata</taxon>
        <taxon>Euteleostomi</taxon>
        <taxon>Mammalia</taxon>
        <taxon>Eutheria</taxon>
        <taxon>Laurasiatheria</taxon>
        <taxon>Chiroptera</taxon>
        <taxon>Yangochiroptera</taxon>
        <taxon>Mormoopidae</taxon>
        <taxon>Pteronotus</taxon>
    </lineage>
</organism>
<sequence length="379" mass="42654">MLHSSLHPSIPQPRGRRAKKAAFVLLSVCLVVLWDLGERPEHILQWLMLHLASLQLGLLFKGVCSLVEELRHVHSRYQGSYWKAVRACLGCPIRCGTLLLLSCYFYTPFPNTTHLPFTWTLALLGLSQALSILLDLQDLAPAEVSAVCERRNLNVAQGMAWSFYIGYLRLILPGLPARIHSYNQHHNNLLRGAGSHRLYILFPLDCGVPDDLSMVDPNIRFLHELPLQKADRAGIKSRVYTNSVYELLENGRPVGACVLEYATPLQTLFAMSQDSRAGFSREDRLEQAKLFCKTLEDILADAPECQNNCRLVVYQEPAEGGNFSLSQEILRHLKQEEKEEVTVDSARTSVMPDPSMLPQGPELLISSMDQPLPLRTDVF</sequence>
<protein>
    <recommendedName>
        <fullName evidence="3">Stimulator of interferon genes protein</fullName>
        <shortName evidence="7">STING</shortName>
    </recommendedName>
</protein>